<protein>
    <recommendedName>
        <fullName evidence="1">Small ribosomal subunit protein uS8</fullName>
    </recommendedName>
    <alternativeName>
        <fullName evidence="2">30S ribosomal protein S8</fullName>
    </alternativeName>
</protein>
<proteinExistence type="inferred from homology"/>
<gene>
    <name evidence="1" type="primary">rpsH</name>
    <name type="ordered locus">AYWB_508</name>
</gene>
<feature type="chain" id="PRO_0000290801" description="Small ribosomal subunit protein uS8">
    <location>
        <begin position="1"/>
        <end position="130"/>
    </location>
</feature>
<accession>Q2NIW8</accession>
<organism>
    <name type="scientific">Aster yellows witches'-broom phytoplasma (strain AYWB)</name>
    <dbReference type="NCBI Taxonomy" id="322098"/>
    <lineage>
        <taxon>Bacteria</taxon>
        <taxon>Bacillati</taxon>
        <taxon>Mycoplasmatota</taxon>
        <taxon>Mollicutes</taxon>
        <taxon>Acholeplasmatales</taxon>
        <taxon>Acholeplasmataceae</taxon>
        <taxon>Candidatus Phytoplasma</taxon>
        <taxon>16SrI (Aster yellows group)</taxon>
    </lineage>
</organism>
<comment type="function">
    <text evidence="1">One of the primary rRNA binding proteins, it binds directly to 16S rRNA central domain where it helps coordinate assembly of the platform of the 30S subunit.</text>
</comment>
<comment type="subunit">
    <text evidence="1">Part of the 30S ribosomal subunit. Contacts proteins S5 and S12.</text>
</comment>
<comment type="similarity">
    <text evidence="1">Belongs to the universal ribosomal protein uS8 family.</text>
</comment>
<sequence length="130" mass="14375">MVMTDPIADMLTRIRNANQMSHLKVLVPASKLKLEILAVLKKEGFIKDFYLPQSSREIIISLKYSPNKERVIKGLKRVSKPGLRVYASAEQIPKVLNGLGVALVSTSKGILTDAQARLSQVGGEVLAYIW</sequence>
<keyword id="KW-0687">Ribonucleoprotein</keyword>
<keyword id="KW-0689">Ribosomal protein</keyword>
<keyword id="KW-0694">RNA-binding</keyword>
<keyword id="KW-0699">rRNA-binding</keyword>
<evidence type="ECO:0000255" key="1">
    <source>
        <dbReference type="HAMAP-Rule" id="MF_01302"/>
    </source>
</evidence>
<evidence type="ECO:0000305" key="2"/>
<reference key="1">
    <citation type="journal article" date="2006" name="J. Bacteriol.">
        <title>Living with genome instability: the adaptation of phytoplasmas to diverse environments of their insect and plant hosts.</title>
        <authorList>
            <person name="Bai X."/>
            <person name="Zhang J."/>
            <person name="Ewing A."/>
            <person name="Miller S.A."/>
            <person name="Jancso Radek A."/>
            <person name="Shevchenko D.V."/>
            <person name="Tsukerman K."/>
            <person name="Walunas T."/>
            <person name="Lapidus A."/>
            <person name="Campbell J.W."/>
            <person name="Hogenhout S.A."/>
        </authorList>
    </citation>
    <scope>NUCLEOTIDE SEQUENCE [LARGE SCALE GENOMIC DNA]</scope>
    <source>
        <strain>AYWB</strain>
    </source>
</reference>
<name>RS8_AYWBP</name>
<dbReference type="EMBL" id="CP000061">
    <property type="protein sequence ID" value="ABC65625.1"/>
    <property type="molecule type" value="Genomic_DNA"/>
</dbReference>
<dbReference type="RefSeq" id="WP_011412787.1">
    <property type="nucleotide sequence ID" value="NC_007716.1"/>
</dbReference>
<dbReference type="SMR" id="Q2NIW8"/>
<dbReference type="STRING" id="322098.AYWB_508"/>
<dbReference type="KEGG" id="ayw:AYWB_508"/>
<dbReference type="eggNOG" id="COG0096">
    <property type="taxonomic scope" value="Bacteria"/>
</dbReference>
<dbReference type="HOGENOM" id="CLU_098428_0_2_14"/>
<dbReference type="OrthoDB" id="9802617at2"/>
<dbReference type="PhylomeDB" id="Q2NIW8"/>
<dbReference type="Proteomes" id="UP000001934">
    <property type="component" value="Chromosome"/>
</dbReference>
<dbReference type="GO" id="GO:1990904">
    <property type="term" value="C:ribonucleoprotein complex"/>
    <property type="evidence" value="ECO:0007669"/>
    <property type="project" value="UniProtKB-KW"/>
</dbReference>
<dbReference type="GO" id="GO:0005840">
    <property type="term" value="C:ribosome"/>
    <property type="evidence" value="ECO:0007669"/>
    <property type="project" value="UniProtKB-KW"/>
</dbReference>
<dbReference type="GO" id="GO:0019843">
    <property type="term" value="F:rRNA binding"/>
    <property type="evidence" value="ECO:0007669"/>
    <property type="project" value="UniProtKB-UniRule"/>
</dbReference>
<dbReference type="GO" id="GO:0003735">
    <property type="term" value="F:structural constituent of ribosome"/>
    <property type="evidence" value="ECO:0007669"/>
    <property type="project" value="InterPro"/>
</dbReference>
<dbReference type="GO" id="GO:0006412">
    <property type="term" value="P:translation"/>
    <property type="evidence" value="ECO:0007669"/>
    <property type="project" value="UniProtKB-UniRule"/>
</dbReference>
<dbReference type="FunFam" id="3.30.1370.30:FF:000002">
    <property type="entry name" value="30S ribosomal protein S8"/>
    <property type="match status" value="1"/>
</dbReference>
<dbReference type="FunFam" id="3.30.1490.10:FF:000001">
    <property type="entry name" value="30S ribosomal protein S8"/>
    <property type="match status" value="1"/>
</dbReference>
<dbReference type="Gene3D" id="3.30.1370.30">
    <property type="match status" value="1"/>
</dbReference>
<dbReference type="Gene3D" id="3.30.1490.10">
    <property type="match status" value="1"/>
</dbReference>
<dbReference type="HAMAP" id="MF_01302_B">
    <property type="entry name" value="Ribosomal_uS8_B"/>
    <property type="match status" value="1"/>
</dbReference>
<dbReference type="InterPro" id="IPR000630">
    <property type="entry name" value="Ribosomal_uS8"/>
</dbReference>
<dbReference type="InterPro" id="IPR047863">
    <property type="entry name" value="Ribosomal_uS8_CS"/>
</dbReference>
<dbReference type="InterPro" id="IPR035987">
    <property type="entry name" value="Ribosomal_uS8_sf"/>
</dbReference>
<dbReference type="NCBIfam" id="NF001109">
    <property type="entry name" value="PRK00136.1"/>
    <property type="match status" value="1"/>
</dbReference>
<dbReference type="PANTHER" id="PTHR11758">
    <property type="entry name" value="40S RIBOSOMAL PROTEIN S15A"/>
    <property type="match status" value="1"/>
</dbReference>
<dbReference type="Pfam" id="PF00410">
    <property type="entry name" value="Ribosomal_S8"/>
    <property type="match status" value="1"/>
</dbReference>
<dbReference type="SUPFAM" id="SSF56047">
    <property type="entry name" value="Ribosomal protein S8"/>
    <property type="match status" value="1"/>
</dbReference>
<dbReference type="PROSITE" id="PS00053">
    <property type="entry name" value="RIBOSOMAL_S8"/>
    <property type="match status" value="1"/>
</dbReference>